<feature type="transit peptide" description="Chloroplast" evidence="5">
    <location>
        <begin position="1"/>
        <end position="82"/>
    </location>
</feature>
<feature type="chain" id="PRO_0000245844" description="Bifunctional aspartokinase/homoserine dehydrogenase 1, chloroplastic">
    <location>
        <begin position="83"/>
        <end position="911"/>
    </location>
</feature>
<feature type="domain" description="ACT 1" evidence="6">
    <location>
        <begin position="407"/>
        <end position="482"/>
    </location>
</feature>
<feature type="domain" description="ACT 2" evidence="6">
    <location>
        <begin position="488"/>
        <end position="565"/>
    </location>
</feature>
<feature type="region of interest" description="Aspartokinase" evidence="1">
    <location>
        <begin position="83"/>
        <end position="331"/>
    </location>
</feature>
<feature type="region of interest" description="Interface" evidence="1">
    <location>
        <begin position="332"/>
        <end position="557"/>
    </location>
</feature>
<feature type="region of interest" description="Homoserine dehydrogenase" evidence="1">
    <location>
        <begin position="558"/>
        <end position="911"/>
    </location>
</feature>
<feature type="active site" description="Proton donor" evidence="5">
    <location>
        <position position="771"/>
    </location>
</feature>
<feature type="binding site" evidence="4">
    <location>
        <position position="563"/>
    </location>
    <ligand>
        <name>NAD(+)</name>
        <dbReference type="ChEBI" id="CHEBI:57540"/>
    </ligand>
</feature>
<feature type="binding site" evidence="2">
    <location>
        <position position="563"/>
    </location>
    <ligand>
        <name>NADP(+)</name>
        <dbReference type="ChEBI" id="CHEBI:58349"/>
    </ligand>
</feature>
<feature type="binding site" evidence="3">
    <location>
        <position position="563"/>
    </location>
    <ligand>
        <name>NADPH</name>
        <dbReference type="ChEBI" id="CHEBI:57783"/>
    </ligand>
</feature>
<feature type="binding site" evidence="4">
    <location>
        <position position="644"/>
    </location>
    <ligand>
        <name>NAD(+)</name>
        <dbReference type="ChEBI" id="CHEBI:57540"/>
    </ligand>
</feature>
<feature type="binding site" evidence="2">
    <location>
        <position position="644"/>
    </location>
    <ligand>
        <name>NADP(+)</name>
        <dbReference type="ChEBI" id="CHEBI:58349"/>
    </ligand>
</feature>
<feature type="binding site" evidence="3">
    <location>
        <position position="644"/>
    </location>
    <ligand>
        <name>NADPH</name>
        <dbReference type="ChEBI" id="CHEBI:57783"/>
    </ligand>
</feature>
<feature type="binding site" evidence="2">
    <location>
        <position position="668"/>
    </location>
    <ligand>
        <name>NADP(+)</name>
        <dbReference type="ChEBI" id="CHEBI:58349"/>
    </ligand>
</feature>
<feature type="binding site" evidence="3">
    <location>
        <position position="668"/>
    </location>
    <ligand>
        <name>NADPH</name>
        <dbReference type="ChEBI" id="CHEBI:57783"/>
    </ligand>
</feature>
<feature type="binding site" evidence="4">
    <location>
        <position position="695"/>
    </location>
    <ligand>
        <name>Na(+)</name>
        <dbReference type="ChEBI" id="CHEBI:29101"/>
    </ligand>
</feature>
<feature type="binding site" evidence="4">
    <location>
        <position position="698"/>
    </location>
    <ligand>
        <name>Na(+)</name>
        <dbReference type="ChEBI" id="CHEBI:29101"/>
    </ligand>
</feature>
<feature type="binding site" evidence="4">
    <location>
        <position position="700"/>
    </location>
    <ligand>
        <name>Na(+)</name>
        <dbReference type="ChEBI" id="CHEBI:29101"/>
    </ligand>
</feature>
<feature type="binding site" evidence="4">
    <location>
        <position position="702"/>
    </location>
    <ligand>
        <name>Na(+)</name>
        <dbReference type="ChEBI" id="CHEBI:29101"/>
    </ligand>
</feature>
<feature type="binding site" evidence="2">
    <location>
        <position position="753"/>
    </location>
    <ligand>
        <name>NADP(+)</name>
        <dbReference type="ChEBI" id="CHEBI:58349"/>
    </ligand>
</feature>
<feature type="binding site" evidence="4">
    <location>
        <position position="756"/>
    </location>
    <ligand>
        <name>L-homoserine</name>
        <dbReference type="ChEBI" id="CHEBI:57476"/>
    </ligand>
</feature>
<feature type="binding site" evidence="2">
    <location>
        <position position="756"/>
    </location>
    <ligand>
        <name>NADP(+)</name>
        <dbReference type="ChEBI" id="CHEBI:58349"/>
    </ligand>
</feature>
<feature type="binding site" evidence="4">
    <location>
        <position position="767"/>
    </location>
    <ligand>
        <name>L-homoserine</name>
        <dbReference type="ChEBI" id="CHEBI:57476"/>
    </ligand>
</feature>
<feature type="binding site" evidence="4">
    <location>
        <position position="888"/>
    </location>
    <ligand>
        <name>NAD(+)</name>
        <dbReference type="ChEBI" id="CHEBI:57540"/>
    </ligand>
</feature>
<feature type="binding site" evidence="2">
    <location>
        <position position="888"/>
    </location>
    <ligand>
        <name>NADP(+)</name>
        <dbReference type="ChEBI" id="CHEBI:58349"/>
    </ligand>
</feature>
<feature type="binding site" evidence="3">
    <location>
        <position position="888"/>
    </location>
    <ligand>
        <name>NADPH</name>
        <dbReference type="ChEBI" id="CHEBI:57783"/>
    </ligand>
</feature>
<feature type="sequence conflict" description="In Ref. 4; BAC43372." evidence="9" ref="4">
    <original>I</original>
    <variation>M</variation>
    <location>
        <position position="517"/>
    </location>
</feature>
<feature type="sequence conflict" description="In Ref. 4; BAC43372." evidence="9" ref="4">
    <original>I</original>
    <variation>F</variation>
    <location>
        <position position="900"/>
    </location>
</feature>
<name>AKH1_ARATH</name>
<proteinExistence type="evidence at protein level"/>
<dbReference type="EC" id="2.7.2.4" evidence="7"/>
<dbReference type="EC" id="1.1.1.3" evidence="7"/>
<dbReference type="EMBL" id="AC004793">
    <property type="protein sequence ID" value="AAD21689.1"/>
    <property type="molecule type" value="Genomic_DNA"/>
</dbReference>
<dbReference type="EMBL" id="AC007654">
    <property type="protein sequence ID" value="AAF24602.1"/>
    <property type="status" value="ALT_SEQ"/>
    <property type="molecule type" value="Genomic_DNA"/>
</dbReference>
<dbReference type="EMBL" id="CP002684">
    <property type="protein sequence ID" value="AEE31330.1"/>
    <property type="molecule type" value="Genomic_DNA"/>
</dbReference>
<dbReference type="EMBL" id="AK118779">
    <property type="protein sequence ID" value="BAC43372.1"/>
    <property type="molecule type" value="mRNA"/>
</dbReference>
<dbReference type="EMBL" id="X71364">
    <property type="protein sequence ID" value="CAA50500.2"/>
    <property type="status" value="ALT_SEQ"/>
    <property type="molecule type" value="Genomic_DNA"/>
</dbReference>
<dbReference type="PIR" id="E86438">
    <property type="entry name" value="E86438"/>
</dbReference>
<dbReference type="PIR" id="S46497">
    <property type="entry name" value="S46497"/>
</dbReference>
<dbReference type="RefSeq" id="NP_174408.1">
    <property type="nucleotide sequence ID" value="NM_102861.3"/>
</dbReference>
<dbReference type="SMR" id="Q9SA18"/>
<dbReference type="BioGRID" id="25246">
    <property type="interactions" value="3"/>
</dbReference>
<dbReference type="FunCoup" id="Q9SA18">
    <property type="interactions" value="463"/>
</dbReference>
<dbReference type="IntAct" id="Q9SA18">
    <property type="interactions" value="1"/>
</dbReference>
<dbReference type="STRING" id="3702.Q9SA18"/>
<dbReference type="iPTMnet" id="Q9SA18"/>
<dbReference type="PaxDb" id="3702-AT1G31230.1"/>
<dbReference type="ProteomicsDB" id="244808"/>
<dbReference type="EnsemblPlants" id="AT1G31230.1">
    <property type="protein sequence ID" value="AT1G31230.1"/>
    <property type="gene ID" value="AT1G31230"/>
</dbReference>
<dbReference type="GeneID" id="840011"/>
<dbReference type="Gramene" id="AT1G31230.1">
    <property type="protein sequence ID" value="AT1G31230.1"/>
    <property type="gene ID" value="AT1G31230"/>
</dbReference>
<dbReference type="KEGG" id="ath:AT1G31230"/>
<dbReference type="Araport" id="AT1G31230"/>
<dbReference type="TAIR" id="AT1G31230">
    <property type="gene designation" value="AK-HSDH I"/>
</dbReference>
<dbReference type="eggNOG" id="ENOG502QQBK">
    <property type="taxonomic scope" value="Eukaryota"/>
</dbReference>
<dbReference type="HOGENOM" id="CLU_009116_7_1_1"/>
<dbReference type="InParanoid" id="Q9SA18"/>
<dbReference type="OMA" id="CYYDWLL"/>
<dbReference type="PhylomeDB" id="Q9SA18"/>
<dbReference type="BRENDA" id="2.7.2.4">
    <property type="organism ID" value="399"/>
</dbReference>
<dbReference type="SABIO-RK" id="Q9SA18"/>
<dbReference type="UniPathway" id="UPA00034">
    <property type="reaction ID" value="UER00015"/>
</dbReference>
<dbReference type="UniPathway" id="UPA00050">
    <property type="reaction ID" value="UER00063"/>
</dbReference>
<dbReference type="UniPathway" id="UPA00050">
    <property type="reaction ID" value="UER00461"/>
</dbReference>
<dbReference type="UniPathway" id="UPA00051">
    <property type="reaction ID" value="UER00462"/>
</dbReference>
<dbReference type="UniPathway" id="UPA00051">
    <property type="reaction ID" value="UER00465"/>
</dbReference>
<dbReference type="PRO" id="PR:Q9SA18"/>
<dbReference type="Proteomes" id="UP000006548">
    <property type="component" value="Chromosome 1"/>
</dbReference>
<dbReference type="ExpressionAtlas" id="Q9SA18">
    <property type="expression patterns" value="baseline and differential"/>
</dbReference>
<dbReference type="GO" id="GO:0009507">
    <property type="term" value="C:chloroplast"/>
    <property type="evidence" value="ECO:0007005"/>
    <property type="project" value="TAIR"/>
</dbReference>
<dbReference type="GO" id="GO:0009570">
    <property type="term" value="C:chloroplast stroma"/>
    <property type="evidence" value="ECO:0007005"/>
    <property type="project" value="TAIR"/>
</dbReference>
<dbReference type="GO" id="GO:0005829">
    <property type="term" value="C:cytosol"/>
    <property type="evidence" value="ECO:0007005"/>
    <property type="project" value="TAIR"/>
</dbReference>
<dbReference type="GO" id="GO:0004072">
    <property type="term" value="F:aspartate kinase activity"/>
    <property type="evidence" value="ECO:0000314"/>
    <property type="project" value="TAIR"/>
</dbReference>
<dbReference type="GO" id="GO:0005524">
    <property type="term" value="F:ATP binding"/>
    <property type="evidence" value="ECO:0007669"/>
    <property type="project" value="UniProtKB-KW"/>
</dbReference>
<dbReference type="GO" id="GO:0004412">
    <property type="term" value="F:homoserine dehydrogenase activity"/>
    <property type="evidence" value="ECO:0000314"/>
    <property type="project" value="TAIR"/>
</dbReference>
<dbReference type="GO" id="GO:0046872">
    <property type="term" value="F:metal ion binding"/>
    <property type="evidence" value="ECO:0007669"/>
    <property type="project" value="UniProtKB-KW"/>
</dbReference>
<dbReference type="GO" id="GO:0070403">
    <property type="term" value="F:NAD+ binding"/>
    <property type="evidence" value="ECO:0000250"/>
    <property type="project" value="UniProtKB"/>
</dbReference>
<dbReference type="GO" id="GO:0050661">
    <property type="term" value="F:NADP binding"/>
    <property type="evidence" value="ECO:0007669"/>
    <property type="project" value="InterPro"/>
</dbReference>
<dbReference type="GO" id="GO:0009089">
    <property type="term" value="P:lysine biosynthetic process via diaminopimelate"/>
    <property type="evidence" value="ECO:0000314"/>
    <property type="project" value="UniProtKB"/>
</dbReference>
<dbReference type="GO" id="GO:0009086">
    <property type="term" value="P:methionine biosynthetic process"/>
    <property type="evidence" value="ECO:0000250"/>
    <property type="project" value="UniProtKB"/>
</dbReference>
<dbReference type="GO" id="GO:0009088">
    <property type="term" value="P:threonine biosynthetic process"/>
    <property type="evidence" value="ECO:0000250"/>
    <property type="project" value="UniProtKB"/>
</dbReference>
<dbReference type="CDD" id="cd04257">
    <property type="entry name" value="AAK_AK-HSDH"/>
    <property type="match status" value="1"/>
</dbReference>
<dbReference type="CDD" id="cd04921">
    <property type="entry name" value="ACT_AKi-HSDH-ThrA-like_1"/>
    <property type="match status" value="1"/>
</dbReference>
<dbReference type="CDD" id="cd04922">
    <property type="entry name" value="ACT_AKi-HSDH-ThrA_2"/>
    <property type="match status" value="1"/>
</dbReference>
<dbReference type="FunFam" id="3.30.2130.10:FF:000001">
    <property type="entry name" value="Bifunctional aspartokinase/homoserine dehydrogenase"/>
    <property type="match status" value="1"/>
</dbReference>
<dbReference type="FunFam" id="3.30.360.10:FF:000006">
    <property type="entry name" value="Bifunctional aspartokinase/homoserine dehydrogenase"/>
    <property type="match status" value="1"/>
</dbReference>
<dbReference type="FunFam" id="3.40.1160.10:FF:000017">
    <property type="entry name" value="Bifunctional aspartokinase/homoserine dehydrogenase"/>
    <property type="match status" value="1"/>
</dbReference>
<dbReference type="FunFam" id="3.40.50.720:FF:000083">
    <property type="entry name" value="Bifunctional aspartokinase/homoserine dehydrogenase"/>
    <property type="match status" value="1"/>
</dbReference>
<dbReference type="Gene3D" id="3.40.1160.10">
    <property type="entry name" value="Acetylglutamate kinase-like"/>
    <property type="match status" value="1"/>
</dbReference>
<dbReference type="Gene3D" id="3.30.360.10">
    <property type="entry name" value="Dihydrodipicolinate Reductase, domain 2"/>
    <property type="match status" value="1"/>
</dbReference>
<dbReference type="Gene3D" id="3.40.50.720">
    <property type="entry name" value="NAD(P)-binding Rossmann-like Domain"/>
    <property type="match status" value="1"/>
</dbReference>
<dbReference type="Gene3D" id="3.30.2130.10">
    <property type="entry name" value="VC0802-like"/>
    <property type="match status" value="1"/>
</dbReference>
<dbReference type="InterPro" id="IPR036393">
    <property type="entry name" value="AceGlu_kinase-like_sf"/>
</dbReference>
<dbReference type="InterPro" id="IPR045865">
    <property type="entry name" value="ACT-like_dom_sf"/>
</dbReference>
<dbReference type="InterPro" id="IPR054352">
    <property type="entry name" value="ACT_Aspartokinase"/>
</dbReference>
<dbReference type="InterPro" id="IPR002912">
    <property type="entry name" value="ACT_dom"/>
</dbReference>
<dbReference type="InterPro" id="IPR041743">
    <property type="entry name" value="AK-HSDH_N"/>
</dbReference>
<dbReference type="InterPro" id="IPR001048">
    <property type="entry name" value="Asp/Glu/Uridylate_kinase"/>
</dbReference>
<dbReference type="InterPro" id="IPR005106">
    <property type="entry name" value="Asp/hSer_DH_NAD-bd"/>
</dbReference>
<dbReference type="InterPro" id="IPR001341">
    <property type="entry name" value="Asp_kinase"/>
</dbReference>
<dbReference type="InterPro" id="IPR018042">
    <property type="entry name" value="Aspartate_kinase_CS"/>
</dbReference>
<dbReference type="InterPro" id="IPR011147">
    <property type="entry name" value="Bifunc_Aspkin/hSer_DH"/>
</dbReference>
<dbReference type="InterPro" id="IPR001342">
    <property type="entry name" value="HDH_cat"/>
</dbReference>
<dbReference type="InterPro" id="IPR019811">
    <property type="entry name" value="HDH_CS"/>
</dbReference>
<dbReference type="InterPro" id="IPR036291">
    <property type="entry name" value="NAD(P)-bd_dom_sf"/>
</dbReference>
<dbReference type="NCBIfam" id="TIGR00657">
    <property type="entry name" value="asp_kinases"/>
    <property type="match status" value="1"/>
</dbReference>
<dbReference type="NCBIfam" id="NF006959">
    <property type="entry name" value="PRK09436.1"/>
    <property type="match status" value="1"/>
</dbReference>
<dbReference type="NCBIfam" id="NF007003">
    <property type="entry name" value="PRK09466.1"/>
    <property type="match status" value="1"/>
</dbReference>
<dbReference type="PANTHER" id="PTHR43070">
    <property type="match status" value="1"/>
</dbReference>
<dbReference type="PANTHER" id="PTHR43070:SF6">
    <property type="entry name" value="BIFUNCTIONAL ASPARTOKINASE_HOMOSERINE DEHYDROGENASE 1, CHLOROPLASTIC"/>
    <property type="match status" value="1"/>
</dbReference>
<dbReference type="Pfam" id="PF00696">
    <property type="entry name" value="AA_kinase"/>
    <property type="match status" value="1"/>
</dbReference>
<dbReference type="Pfam" id="PF22468">
    <property type="entry name" value="ACT_9"/>
    <property type="match status" value="2"/>
</dbReference>
<dbReference type="Pfam" id="PF00742">
    <property type="entry name" value="Homoserine_dh"/>
    <property type="match status" value="1"/>
</dbReference>
<dbReference type="Pfam" id="PF03447">
    <property type="entry name" value="NAD_binding_3"/>
    <property type="match status" value="1"/>
</dbReference>
<dbReference type="SUPFAM" id="SSF55021">
    <property type="entry name" value="ACT-like"/>
    <property type="match status" value="2"/>
</dbReference>
<dbReference type="SUPFAM" id="SSF53633">
    <property type="entry name" value="Carbamate kinase-like"/>
    <property type="match status" value="1"/>
</dbReference>
<dbReference type="SUPFAM" id="SSF55347">
    <property type="entry name" value="Glyceraldehyde-3-phosphate dehydrogenase-like, C-terminal domain"/>
    <property type="match status" value="1"/>
</dbReference>
<dbReference type="SUPFAM" id="SSF51735">
    <property type="entry name" value="NAD(P)-binding Rossmann-fold domains"/>
    <property type="match status" value="1"/>
</dbReference>
<dbReference type="PROSITE" id="PS51671">
    <property type="entry name" value="ACT"/>
    <property type="match status" value="2"/>
</dbReference>
<dbReference type="PROSITE" id="PS00324">
    <property type="entry name" value="ASPARTOKINASE"/>
    <property type="match status" value="1"/>
</dbReference>
<dbReference type="PROSITE" id="PS01042">
    <property type="entry name" value="HOMOSER_DHGENASE"/>
    <property type="match status" value="1"/>
</dbReference>
<gene>
    <name evidence="9" type="primary">AKHSDH1</name>
    <name evidence="8" type="synonym">AK-HSDH I</name>
    <name evidence="11" type="ordered locus">At1g31230</name>
    <name evidence="12" type="ORF">F28K20.19</name>
    <name evidence="13" type="ORF">T19E23.1</name>
</gene>
<sequence>MPVVSLAKVVTSPAVAGDLAVRVPFIYGKRLVSNRVSFGKLRRRSCIGQCVRSELQSPRVLGSVTDLALDNSVENGHLPKGDSWAVHKFGGTCVGNSERIKDVAAVVVKDDSERKLVVVSAMSKVTDMMYDLIHRAESRDDSYLSALSGVLEKHRATAVDLLDGDELSSFLARLNDDINNLKAMLRAIYIAGHATESFSDFVVGHGELWSAQMLAAVVRKSGLDCTWMDARDVLVVIPTSSNQVDPDFVESEKRLEKWFTQNSAKIIIATGFIASTPQNIPTTLKRDGSDFSAAIMSALFRSHQLTIWTDVDGVYSADPRKVSEAVVLKTLSYQEAWEMSYFGANVLHPRTIIPVMKYDIPIVIRNIFNLSAPGTMICRQIDDEDGFKLDAPVKGFATIDNLALVNVEGTGMAGVPGTASAIFSAVKEVGANVIMISQASSEHSVCFAVPEKEVKAVSEALNSRFRQALAGGRLSQIEIIPNCSILAAVGQKMASTPGVSATFFNALAKANINIRAIAQGCSEFNITVVVKREDCIRALRAVHSRFYLSRTTLAVGIIGPGLIGGTLLDQIRDQAAVLKEEFKIDLRVIGITGSSKMLMSESGIDLSRWRELMKEEGEKADMEKFTQYVKGNHFIPNSVMVDCTADADIASCYYDWLLRGIHVVTPNKKANSGPLDQYLKIRDLQRKSYTHYFYEATVGAGLPIISTLRGLLETGDKILRIEGIFSGTLSYLFNNFVGTRSFSEVVAEAKQAGFTEPDPRDDLSGTDVARKVTILARESGLKLDLEGLPVQNLVPKPLQACASAEEFMEKLPQFDEELSKQREEAEAAGEVLRYVGVVDAVEKKGTVELKRYKKDHPFAQLSGADNIIAFTTKRYKEQPLIVRGPGAGAQVTAGGIFSDILRLAFYLGAPS</sequence>
<evidence type="ECO:0000250" key="1"/>
<evidence type="ECO:0000250" key="2">
    <source>
        <dbReference type="UniProtKB" id="F9VNG5"/>
    </source>
</evidence>
<evidence type="ECO:0000250" key="3">
    <source>
        <dbReference type="UniProtKB" id="O58802"/>
    </source>
</evidence>
<evidence type="ECO:0000250" key="4">
    <source>
        <dbReference type="UniProtKB" id="P31116"/>
    </source>
</evidence>
<evidence type="ECO:0000255" key="5"/>
<evidence type="ECO:0000255" key="6">
    <source>
        <dbReference type="PROSITE-ProRule" id="PRU01007"/>
    </source>
</evidence>
<evidence type="ECO:0000269" key="7">
    <source>
    </source>
</evidence>
<evidence type="ECO:0000303" key="8">
    <source>
    </source>
</evidence>
<evidence type="ECO:0000305" key="9"/>
<evidence type="ECO:0000305" key="10">
    <source>
    </source>
</evidence>
<evidence type="ECO:0000312" key="11">
    <source>
        <dbReference type="Araport" id="AT1G31230"/>
    </source>
</evidence>
<evidence type="ECO:0000312" key="12">
    <source>
        <dbReference type="EMBL" id="AAD21689.1"/>
    </source>
</evidence>
<evidence type="ECO:0000312" key="13">
    <source>
        <dbReference type="EMBL" id="AAF24602.1"/>
    </source>
</evidence>
<reference key="1">
    <citation type="journal article" date="2000" name="Nature">
        <title>Sequence and analysis of chromosome 1 of the plant Arabidopsis thaliana.</title>
        <authorList>
            <person name="Theologis A."/>
            <person name="Ecker J.R."/>
            <person name="Palm C.J."/>
            <person name="Federspiel N.A."/>
            <person name="Kaul S."/>
            <person name="White O."/>
            <person name="Alonso J."/>
            <person name="Altafi H."/>
            <person name="Araujo R."/>
            <person name="Bowman C.L."/>
            <person name="Brooks S.Y."/>
            <person name="Buehler E."/>
            <person name="Chan A."/>
            <person name="Chao Q."/>
            <person name="Chen H."/>
            <person name="Cheuk R.F."/>
            <person name="Chin C.W."/>
            <person name="Chung M.K."/>
            <person name="Conn L."/>
            <person name="Conway A.B."/>
            <person name="Conway A.R."/>
            <person name="Creasy T.H."/>
            <person name="Dewar K."/>
            <person name="Dunn P."/>
            <person name="Etgu P."/>
            <person name="Feldblyum T.V."/>
            <person name="Feng J.-D."/>
            <person name="Fong B."/>
            <person name="Fujii C.Y."/>
            <person name="Gill J.E."/>
            <person name="Goldsmith A.D."/>
            <person name="Haas B."/>
            <person name="Hansen N.F."/>
            <person name="Hughes B."/>
            <person name="Huizar L."/>
            <person name="Hunter J.L."/>
            <person name="Jenkins J."/>
            <person name="Johnson-Hopson C."/>
            <person name="Khan S."/>
            <person name="Khaykin E."/>
            <person name="Kim C.J."/>
            <person name="Koo H.L."/>
            <person name="Kremenetskaia I."/>
            <person name="Kurtz D.B."/>
            <person name="Kwan A."/>
            <person name="Lam B."/>
            <person name="Langin-Hooper S."/>
            <person name="Lee A."/>
            <person name="Lee J.M."/>
            <person name="Lenz C.A."/>
            <person name="Li J.H."/>
            <person name="Li Y.-P."/>
            <person name="Lin X."/>
            <person name="Liu S.X."/>
            <person name="Liu Z.A."/>
            <person name="Luros J.S."/>
            <person name="Maiti R."/>
            <person name="Marziali A."/>
            <person name="Militscher J."/>
            <person name="Miranda M."/>
            <person name="Nguyen M."/>
            <person name="Nierman W.C."/>
            <person name="Osborne B.I."/>
            <person name="Pai G."/>
            <person name="Peterson J."/>
            <person name="Pham P.K."/>
            <person name="Rizzo M."/>
            <person name="Rooney T."/>
            <person name="Rowley D."/>
            <person name="Sakano H."/>
            <person name="Salzberg S.L."/>
            <person name="Schwartz J.R."/>
            <person name="Shinn P."/>
            <person name="Southwick A.M."/>
            <person name="Sun H."/>
            <person name="Tallon L.J."/>
            <person name="Tambunga G."/>
            <person name="Toriumi M.J."/>
            <person name="Town C.D."/>
            <person name="Utterback T."/>
            <person name="Van Aken S."/>
            <person name="Vaysberg M."/>
            <person name="Vysotskaia V.S."/>
            <person name="Walker M."/>
            <person name="Wu D."/>
            <person name="Yu G."/>
            <person name="Fraser C.M."/>
            <person name="Venter J.C."/>
            <person name="Davis R.W."/>
        </authorList>
    </citation>
    <scope>NUCLEOTIDE SEQUENCE [LARGE SCALE GENOMIC DNA]</scope>
    <source>
        <strain>cv. Columbia</strain>
    </source>
</reference>
<reference key="2">
    <citation type="journal article" date="2017" name="Plant J.">
        <title>Araport11: a complete reannotation of the Arabidopsis thaliana reference genome.</title>
        <authorList>
            <person name="Cheng C.Y."/>
            <person name="Krishnakumar V."/>
            <person name="Chan A.P."/>
            <person name="Thibaud-Nissen F."/>
            <person name="Schobel S."/>
            <person name="Town C.D."/>
        </authorList>
    </citation>
    <scope>GENOME REANNOTATION</scope>
    <source>
        <strain>cv. Columbia</strain>
    </source>
</reference>
<reference key="3">
    <citation type="journal article" date="2002" name="Protein Expr. Purif.">
        <title>Overproduction, purification, and characterization of recombinant bifunctional threonine-sensitive aspartate kinase-homoserine dehydrogenase from Arabidopsis thaliana.</title>
        <authorList>
            <person name="Paris S."/>
            <person name="Wessel P.M."/>
            <person name="Dumas R."/>
        </authorList>
    </citation>
    <scope>NUCLEOTIDE SEQUENCE [MRNA]</scope>
</reference>
<reference key="4">
    <citation type="journal article" date="2002" name="Science">
        <title>Functional annotation of a full-length Arabidopsis cDNA collection.</title>
        <authorList>
            <person name="Seki M."/>
            <person name="Narusaka M."/>
            <person name="Kamiya A."/>
            <person name="Ishida J."/>
            <person name="Satou M."/>
            <person name="Sakurai T."/>
            <person name="Nakajima M."/>
            <person name="Enju A."/>
            <person name="Akiyama K."/>
            <person name="Oono Y."/>
            <person name="Muramatsu M."/>
            <person name="Hayashizaki Y."/>
            <person name="Kawai J."/>
            <person name="Carninci P."/>
            <person name="Itoh M."/>
            <person name="Ishii Y."/>
            <person name="Arakawa T."/>
            <person name="Shibata K."/>
            <person name="Shinagawa A."/>
            <person name="Shinozaki K."/>
        </authorList>
    </citation>
    <scope>NUCLEOTIDE SEQUENCE [LARGE SCALE MRNA]</scope>
    <source>
        <strain>cv. Columbia</strain>
    </source>
</reference>
<reference key="5">
    <citation type="journal article" date="1994" name="Plant Mol. Biol.">
        <title>Molecular analysis of the aspartate kinase-homoserine dehydrogenase gene from Arabidopsis thaliana.</title>
        <authorList>
            <person name="Ghislain M."/>
            <person name="Frankard V."/>
            <person name="Vandenbossche D."/>
            <person name="Matthews B."/>
            <person name="Jacobs M."/>
        </authorList>
    </citation>
    <scope>NUCLEOTIDE SEQUENCE [GENOMIC DNA] OF 1-573</scope>
    <source>
        <strain>cv. Columbia</strain>
    </source>
</reference>
<reference key="6">
    <citation type="journal article" date="2005" name="J. Biol. Chem.">
        <title>Identification of six novel allosteric effectors of Arabidopsis thaliana aspartate kinase-homoserine dehydrogenase isoforms. Physiological context sets the specificity.</title>
        <authorList>
            <person name="Curien G."/>
            <person name="Ravanel S."/>
            <person name="Robert M."/>
            <person name="Dumas R."/>
        </authorList>
    </citation>
    <scope>FUNCTION</scope>
    <scope>CATALYTIC ACTIVITY</scope>
    <scope>ACTIVITY REGULATION</scope>
    <scope>BIOPHYSICOCHEMICAL PROPERTIES</scope>
</reference>
<comment type="function">
    <text evidence="7">Bifunctional aspartate kinase and homoserine dehydrogenase that catalyzes the first and the third steps toward the synthesis of lysine, methionine and threonine from aspartate.</text>
</comment>
<comment type="catalytic activity">
    <reaction evidence="7">
        <text>L-homoserine + NADP(+) = L-aspartate 4-semialdehyde + NADPH + H(+)</text>
        <dbReference type="Rhea" id="RHEA:15761"/>
        <dbReference type="ChEBI" id="CHEBI:15378"/>
        <dbReference type="ChEBI" id="CHEBI:57476"/>
        <dbReference type="ChEBI" id="CHEBI:57783"/>
        <dbReference type="ChEBI" id="CHEBI:58349"/>
        <dbReference type="ChEBI" id="CHEBI:537519"/>
        <dbReference type="EC" id="1.1.1.3"/>
    </reaction>
    <physiologicalReaction direction="right-to-left" evidence="7">
        <dbReference type="Rhea" id="RHEA:15763"/>
    </physiologicalReaction>
</comment>
<comment type="catalytic activity">
    <reaction evidence="7">
        <text>L-homoserine + NAD(+) = L-aspartate 4-semialdehyde + NADH + H(+)</text>
        <dbReference type="Rhea" id="RHEA:15757"/>
        <dbReference type="ChEBI" id="CHEBI:15378"/>
        <dbReference type="ChEBI" id="CHEBI:57476"/>
        <dbReference type="ChEBI" id="CHEBI:57540"/>
        <dbReference type="ChEBI" id="CHEBI:57945"/>
        <dbReference type="ChEBI" id="CHEBI:537519"/>
        <dbReference type="EC" id="1.1.1.3"/>
    </reaction>
    <physiologicalReaction direction="right-to-left" evidence="7">
        <dbReference type="Rhea" id="RHEA:15759"/>
    </physiologicalReaction>
</comment>
<comment type="catalytic activity">
    <reaction evidence="7">
        <text>L-aspartate + ATP = 4-phospho-L-aspartate + ADP</text>
        <dbReference type="Rhea" id="RHEA:23776"/>
        <dbReference type="ChEBI" id="CHEBI:29991"/>
        <dbReference type="ChEBI" id="CHEBI:30616"/>
        <dbReference type="ChEBI" id="CHEBI:57535"/>
        <dbReference type="ChEBI" id="CHEBI:456216"/>
        <dbReference type="EC" id="2.7.2.4"/>
    </reaction>
    <physiologicalReaction direction="left-to-right" evidence="7">
        <dbReference type="Rhea" id="RHEA:23777"/>
    </physiologicalReaction>
</comment>
<comment type="cofactor">
    <cofactor evidence="4">
        <name>a metal cation</name>
        <dbReference type="ChEBI" id="CHEBI:25213"/>
    </cofactor>
    <text evidence="4">A sodium ion is seen in the structure; a metal ion may subtly affect the relative position of the nucleotide-binding region to influence enzyme activity, and could increase the stability of the enzyme.</text>
</comment>
<comment type="activity regulation">
    <text evidence="7">Inhibition of aspartate kinase activity by threonine and leucine and 3-fold activation by cysteine, isoleucine, valine, serine and alanine at 2.5 mM. Partial inhibition of homoserine dehydrogenase activity by threonine and cysteine (14% of activity remaining at saturation with either amino acid). No synergy between the effectors for both activation or inhibition.</text>
</comment>
<comment type="biophysicochemical properties">
    <kinetics>
        <KM evidence="7">2.6 mM for aspartate for the aspartokinase activity (at pH 8.0, in the presence of 150 mM KCl, 20 mM MgCl(2), 200 uM NADPH and 20 mM ATP)</KM>
        <KM evidence="7">2.3 mM for aspartate for the aspartokinase activity (at pH 8.0, in the presence of 150 mM KCl, 20 mM MgCl(2), 200 uM NADPH, 20 mM ATP and a saturating concentration of alanine)</KM>
        <KM evidence="7">6.5 mM for ATP for the aspartokinase activity (at pH 8.0, in the presence of 150 mM KCl, 20 mM MgCl(2), 200 uM NADPH and 50 mM aspartate)</KM>
        <KM evidence="7">0.48 mM for ATP for the aspartokinase activity (at pH 8.0, in the presence of 150 mM KCl, 20 mM MgCl(2), 200 uM NADPH, 50 mM aspartate and a saturating concentration of alanine)</KM>
        <KM evidence="7">290 uM for aspartate semialdehyde for the forward reaction of the homoserine dehydrogenase activity (at pH 8.0, in the presence of 150 mM KCl and 200 uM NADPH)</KM>
    </kinetics>
</comment>
<comment type="pathway">
    <text evidence="10">Amino-acid biosynthesis; L-lysine biosynthesis via DAP pathway; (S)-tetrahydrodipicolinate from L-aspartate: step 1/4.</text>
</comment>
<comment type="pathway">
    <text evidence="10">Amino-acid biosynthesis; L-methionine biosynthesis via de novo pathway; L-homoserine from L-aspartate: step 1/3.</text>
</comment>
<comment type="pathway">
    <text evidence="10">Amino-acid biosynthesis; L-methionine biosynthesis via de novo pathway; L-homoserine from L-aspartate: step 3/3.</text>
</comment>
<comment type="pathway">
    <text evidence="10">Amino-acid biosynthesis; L-threonine biosynthesis; L-threonine from L-aspartate: step 1/5.</text>
</comment>
<comment type="pathway">
    <text evidence="10">Amino-acid biosynthesis; L-threonine biosynthesis; L-threonine from L-aspartate: step 3/5.</text>
</comment>
<comment type="subunit">
    <text evidence="9">Homo- or heterodimer.</text>
</comment>
<comment type="subcellular location">
    <subcellularLocation>
        <location evidence="5">Plastid</location>
        <location evidence="5">Chloroplast</location>
    </subcellularLocation>
</comment>
<comment type="similarity">
    <text evidence="9">In the N-terminal section; belongs to the aspartokinase family.</text>
</comment>
<comment type="similarity">
    <text evidence="9">In the C-terminal section; belongs to the homoserine dehydrogenase family.</text>
</comment>
<comment type="sequence caution" evidence="9">
    <conflict type="erroneous gene model prediction">
        <sequence resource="EMBL-CDS" id="AAF24602"/>
    </conflict>
</comment>
<comment type="sequence caution" evidence="9">
    <conflict type="erroneous gene model prediction">
        <sequence resource="EMBL-CDS" id="CAA50500"/>
    </conflict>
</comment>
<organism>
    <name type="scientific">Arabidopsis thaliana</name>
    <name type="common">Mouse-ear cress</name>
    <dbReference type="NCBI Taxonomy" id="3702"/>
    <lineage>
        <taxon>Eukaryota</taxon>
        <taxon>Viridiplantae</taxon>
        <taxon>Streptophyta</taxon>
        <taxon>Embryophyta</taxon>
        <taxon>Tracheophyta</taxon>
        <taxon>Spermatophyta</taxon>
        <taxon>Magnoliopsida</taxon>
        <taxon>eudicotyledons</taxon>
        <taxon>Gunneridae</taxon>
        <taxon>Pentapetalae</taxon>
        <taxon>rosids</taxon>
        <taxon>malvids</taxon>
        <taxon>Brassicales</taxon>
        <taxon>Brassicaceae</taxon>
        <taxon>Camelineae</taxon>
        <taxon>Arabidopsis</taxon>
    </lineage>
</organism>
<keyword id="KW-0028">Amino-acid biosynthesis</keyword>
<keyword id="KW-0067">ATP-binding</keyword>
<keyword id="KW-0150">Chloroplast</keyword>
<keyword id="KW-0418">Kinase</keyword>
<keyword id="KW-0457">Lysine biosynthesis</keyword>
<keyword id="KW-0479">Metal-binding</keyword>
<keyword id="KW-0486">Methionine biosynthesis</keyword>
<keyword id="KW-0511">Multifunctional enzyme</keyword>
<keyword id="KW-0520">NAD</keyword>
<keyword id="KW-0521">NADP</keyword>
<keyword id="KW-0547">Nucleotide-binding</keyword>
<keyword id="KW-0560">Oxidoreductase</keyword>
<keyword id="KW-0934">Plastid</keyword>
<keyword id="KW-1185">Reference proteome</keyword>
<keyword id="KW-0677">Repeat</keyword>
<keyword id="KW-0915">Sodium</keyword>
<keyword id="KW-0791">Threonine biosynthesis</keyword>
<keyword id="KW-0808">Transferase</keyword>
<keyword id="KW-0809">Transit peptide</keyword>
<protein>
    <recommendedName>
        <fullName evidence="9">Bifunctional aspartokinase/homoserine dehydrogenase 1, chloroplastic</fullName>
        <shortName evidence="9">AK-HD 1</shortName>
        <shortName evidence="8">AK-HSDH 1</shortName>
    </recommendedName>
    <alternativeName>
        <fullName evidence="9">Beta-aspartyl phosphate homoserine 1</fullName>
    </alternativeName>
    <domain>
        <recommendedName>
            <fullName evidence="9">Aspartokinase</fullName>
            <ecNumber evidence="7">2.7.2.4</ecNumber>
        </recommendedName>
    </domain>
    <domain>
        <recommendedName>
            <fullName evidence="9">Homoserine dehydrogenase</fullName>
            <ecNumber evidence="7">1.1.1.3</ecNumber>
        </recommendedName>
    </domain>
</protein>
<accession>Q9SA18</accession>
<accession>Q8GWK9</accession>
<accession>Q9SHF9</accession>
<accession>Q9SW59</accession>